<name>TRYS_CRIFA</name>
<accession>O60993</accession>
<sequence>MASAERVPVSFNKPGRVPFGEVQGYAPGHIPAYSNKHDHFFSGERSIDDNVFCGFKYQCVEFARRWLLERKGLVLPDVNWACHIFKLKNVKDAATAEEVPVIAVRNGTEAKPEPDTLIIYPSSDVNTVGHVGAITEVGDDYVCIADQNYRFHKWEASYSYKLKLQHKDGVWTIIDDIDPNDVEIPLGWVTFPGYENRPEGAAPPALHPSLHFQPPEEPYLVRKTYEPTETKANWLDLNDPAEKLFVEEFGMDVSRSRLEETTVNYYECDHEFHLRCIAYGTQLHDYFMEATAQVINDDERLRIFKIPEELWPRMRHSWKYQQTYISGRFDFAYNNETHQMKCFEYNADSASTLLECGRIQQKWAESVGLDKEGTRGSGWAVERNLRTAWATCGATGRVHFLVDDEKEEQYTALYCLQAAEAVGLEGKLCVMYDEFRFNEEGYVVDSDGVRVRNIWKTWMWESAISDYFAAQAERGADWKATPADKVRLCDLMLGKDWDILYFEPMWKLIPSNKAILPIIYHNHPDHPAILRAEYELTDELRAVGYARKPIVGRVGRNVTITDGTGEVHAESGGNFGERDMIYQELFSLTKQDGYYAIIGGWMLGDAFSGTGIREDKSIITGLDSPFAAIRIKINAIPRPLTHKDLDKLAEDE</sequence>
<evidence type="ECO:0000250" key="1"/>
<evidence type="ECO:0000255" key="2">
    <source>
        <dbReference type="PROSITE-ProRule" id="PRU00048"/>
    </source>
</evidence>
<evidence type="ECO:0000305" key="3"/>
<dbReference type="EC" id="6.3.1.9"/>
<dbReference type="EMBL" id="AF006615">
    <property type="protein sequence ID" value="AAC39132.1"/>
    <property type="molecule type" value="Genomic_DNA"/>
</dbReference>
<dbReference type="SMR" id="O60993"/>
<dbReference type="BindingDB" id="O60993"/>
<dbReference type="ChEMBL" id="CHEMBL5291598"/>
<dbReference type="KEGG" id="ag:AAC39132"/>
<dbReference type="VEuPathDB" id="TriTrypDB:CFAC1_210035400"/>
<dbReference type="BRENDA" id="6.3.1.9">
    <property type="organism ID" value="1365"/>
</dbReference>
<dbReference type="SABIO-RK" id="O60993"/>
<dbReference type="GO" id="GO:0005524">
    <property type="term" value="F:ATP binding"/>
    <property type="evidence" value="ECO:0007669"/>
    <property type="project" value="UniProtKB-KW"/>
</dbReference>
<dbReference type="GO" id="GO:0008885">
    <property type="term" value="F:glutathionylspermidine synthase activity"/>
    <property type="evidence" value="ECO:0007669"/>
    <property type="project" value="RHEA"/>
</dbReference>
<dbReference type="GO" id="GO:0046872">
    <property type="term" value="F:metal ion binding"/>
    <property type="evidence" value="ECO:0007669"/>
    <property type="project" value="UniProtKB-KW"/>
</dbReference>
<dbReference type="GO" id="GO:0047479">
    <property type="term" value="F:trypanothione synthase activity"/>
    <property type="evidence" value="ECO:0007669"/>
    <property type="project" value="UniProtKB-EC"/>
</dbReference>
<dbReference type="Gene3D" id="3.30.1490.330">
    <property type="match status" value="1"/>
</dbReference>
<dbReference type="Gene3D" id="3.90.1720.10">
    <property type="entry name" value="endopeptidase domain like (from Nostoc punctiforme)"/>
    <property type="match status" value="1"/>
</dbReference>
<dbReference type="InterPro" id="IPR007921">
    <property type="entry name" value="CHAP_dom"/>
</dbReference>
<dbReference type="InterPro" id="IPR051705">
    <property type="entry name" value="Gsp_Synthetase/Amidase"/>
</dbReference>
<dbReference type="InterPro" id="IPR005494">
    <property type="entry name" value="GSPS_pre-ATP-grasp-like_dom"/>
</dbReference>
<dbReference type="InterPro" id="IPR038765">
    <property type="entry name" value="Papain-like_cys_pep_sf"/>
</dbReference>
<dbReference type="InterPro" id="IPR016185">
    <property type="entry name" value="PreATP-grasp_dom_sf"/>
</dbReference>
<dbReference type="PANTHER" id="PTHR30094">
    <property type="entry name" value="BIFUNCTIONAL GLUTATHIONYLSPERMIDINE SYNTHETASE/AMIDASE-RELATED"/>
    <property type="match status" value="1"/>
</dbReference>
<dbReference type="PANTHER" id="PTHR30094:SF17">
    <property type="entry name" value="SYNTHETASE, PUTATIVE-RELATED"/>
    <property type="match status" value="1"/>
</dbReference>
<dbReference type="Pfam" id="PF05257">
    <property type="entry name" value="CHAP"/>
    <property type="match status" value="1"/>
</dbReference>
<dbReference type="Pfam" id="PF03738">
    <property type="entry name" value="GSP_synth"/>
    <property type="match status" value="1"/>
</dbReference>
<dbReference type="SUPFAM" id="SSF54001">
    <property type="entry name" value="Cysteine proteinases"/>
    <property type="match status" value="1"/>
</dbReference>
<dbReference type="SUPFAM" id="SSF56059">
    <property type="entry name" value="Glutathione synthetase ATP-binding domain-like"/>
    <property type="match status" value="1"/>
</dbReference>
<dbReference type="SUPFAM" id="SSF52440">
    <property type="entry name" value="PreATP-grasp domain"/>
    <property type="match status" value="1"/>
</dbReference>
<dbReference type="PROSITE" id="PS50911">
    <property type="entry name" value="CHAP"/>
    <property type="match status" value="1"/>
</dbReference>
<protein>
    <recommendedName>
        <fullName>Trypanothione synthetase</fullName>
        <ecNumber>6.3.1.9</ecNumber>
    </recommendedName>
    <alternativeName>
        <fullName>Cf-TS</fullName>
    </alternativeName>
</protein>
<proteinExistence type="evidence at protein level"/>
<reference key="1">
    <citation type="journal article" date="1998" name="J. Biol. Chem.">
        <title>Cloning and characterization of the two enzymes responsible for trypanothione biosynthesis in Crithidia fasciculata.</title>
        <authorList>
            <person name="Tetaud E."/>
            <person name="Manai F."/>
            <person name="Barrett M.P."/>
            <person name="Nadeau K."/>
            <person name="Walsh C.T."/>
            <person name="Fairlamb A.H."/>
        </authorList>
    </citation>
    <scope>NUCLEOTIDE SEQUENCE [GENOMIC DNA]</scope>
    <scope>PROTEIN SEQUENCE OF 168-191; 232-255; 437-450; 457-474; 592-610 AND 617-630</scope>
    <source>
        <strain>HS6</strain>
    </source>
</reference>
<reference key="2">
    <citation type="journal article" date="1992" name="Protein Sci.">
        <title>Purification of glutathionylspermidine and trypanothione synthetases from Crithidia fasciculata.</title>
        <authorList>
            <person name="Smith K."/>
            <person name="Nadeau K."/>
            <person name="Bradley M."/>
            <person name="Walsh C."/>
            <person name="Fairlamb A.H."/>
        </authorList>
    </citation>
    <scope>PROTEIN SEQUENCE OF 168-191; 232-255; 437-450; 457-474; 592-610 AND 617-630</scope>
    <scope>CHARACTERIZATION</scope>
</reference>
<reference key="3">
    <citation type="journal article" date="1997" name="J. Biol. Chem.">
        <title>Convenient isolation and kinetic mechanism of glutathionylspermidine synthetase from Crithidia fasciculata.</title>
        <authorList>
            <person name="Koenig K."/>
            <person name="Menge U."/>
            <person name="Kiess M."/>
            <person name="Wray V."/>
            <person name="Flohe L."/>
        </authorList>
    </citation>
    <scope>PROTEIN SEQUENCE OF 17-36; 224-229; 235-242; 515-533; 550-561 AND 617-629</scope>
    <scope>CHARACTERIZATION</scope>
</reference>
<organism>
    <name type="scientific">Crithidia fasciculata</name>
    <dbReference type="NCBI Taxonomy" id="5656"/>
    <lineage>
        <taxon>Eukaryota</taxon>
        <taxon>Discoba</taxon>
        <taxon>Euglenozoa</taxon>
        <taxon>Kinetoplastea</taxon>
        <taxon>Metakinetoplastina</taxon>
        <taxon>Trypanosomatida</taxon>
        <taxon>Trypanosomatidae</taxon>
        <taxon>Leishmaniinae</taxon>
        <taxon>Crithidia</taxon>
    </lineage>
</organism>
<gene>
    <name type="primary">TRS</name>
</gene>
<comment type="function">
    <text>Conjugates glutathione (gamma-Glu-Cys-Gly) and glutathionylspermidine to form trypanothione (N(1),N(8)-bis(glutathionyl)spermidine), which is involved in maintaining intracellular thiol redox and in defense against oxidants.</text>
</comment>
<comment type="catalytic activity">
    <reaction>
        <text>spermidine + glutathione + ATP = glutathionylspermidine + ADP + phosphate + H(+)</text>
        <dbReference type="Rhea" id="RHEA:21272"/>
        <dbReference type="ChEBI" id="CHEBI:15378"/>
        <dbReference type="ChEBI" id="CHEBI:30616"/>
        <dbReference type="ChEBI" id="CHEBI:43474"/>
        <dbReference type="ChEBI" id="CHEBI:57834"/>
        <dbReference type="ChEBI" id="CHEBI:57835"/>
        <dbReference type="ChEBI" id="CHEBI:57925"/>
        <dbReference type="ChEBI" id="CHEBI:456216"/>
        <dbReference type="EC" id="6.3.1.9"/>
    </reaction>
</comment>
<comment type="catalytic activity">
    <reaction>
        <text>glutathionylspermidine + glutathione + ATP = trypanothione + ADP + phosphate + H(+)</text>
        <dbReference type="Rhea" id="RHEA:21532"/>
        <dbReference type="ChEBI" id="CHEBI:15378"/>
        <dbReference type="ChEBI" id="CHEBI:30616"/>
        <dbReference type="ChEBI" id="CHEBI:43474"/>
        <dbReference type="ChEBI" id="CHEBI:57835"/>
        <dbReference type="ChEBI" id="CHEBI:57925"/>
        <dbReference type="ChEBI" id="CHEBI:58290"/>
        <dbReference type="ChEBI" id="CHEBI:456216"/>
        <dbReference type="EC" id="6.3.1.9"/>
    </reaction>
</comment>
<comment type="cofactor">
    <cofactor>
        <name>Mg(2+)</name>
        <dbReference type="ChEBI" id="CHEBI:18420"/>
    </cofactor>
</comment>
<comment type="PTM">
    <text>The N-terminus is blocked.</text>
</comment>
<comment type="similarity">
    <text evidence="3">In the C-terminal section; belongs to the glutathionylspermidine synthase preATP-grasp family.</text>
</comment>
<keyword id="KW-0067">ATP-binding</keyword>
<keyword id="KW-0903">Direct protein sequencing</keyword>
<keyword id="KW-0436">Ligase</keyword>
<keyword id="KW-0460">Magnesium</keyword>
<keyword id="KW-0479">Metal-binding</keyword>
<keyword id="KW-0547">Nucleotide-binding</keyword>
<feature type="chain" id="PRO_0000070445" description="Trypanothione synthetase">
    <location>
        <begin position="1"/>
        <end position="652"/>
    </location>
</feature>
<feature type="domain" description="Peptidase C51" evidence="2">
    <location>
        <begin position="34"/>
        <end position="174"/>
    </location>
</feature>
<feature type="binding site" evidence="1">
    <location>
        <begin position="328"/>
        <end position="330"/>
    </location>
    <ligand>
        <name>ATP</name>
        <dbReference type="ChEBI" id="CHEBI:30616"/>
    </ligand>
</feature>
<feature type="binding site" evidence="1">
    <location>
        <position position="330"/>
    </location>
    <ligand>
        <name>Mg(2+)</name>
        <dbReference type="ChEBI" id="CHEBI:18420"/>
        <label>1</label>
    </ligand>
</feature>
<feature type="binding site" evidence="1">
    <location>
        <position position="344"/>
    </location>
    <ligand>
        <name>Mg(2+)</name>
        <dbReference type="ChEBI" id="CHEBI:18420"/>
        <label>1</label>
    </ligand>
</feature>
<feature type="binding site" evidence="1">
    <location>
        <position position="344"/>
    </location>
    <ligand>
        <name>Mg(2+)</name>
        <dbReference type="ChEBI" id="CHEBI:18420"/>
        <label>2</label>
    </ligand>
</feature>
<feature type="binding site" evidence="1">
    <location>
        <position position="346"/>
    </location>
    <ligand>
        <name>Mg(2+)</name>
        <dbReference type="ChEBI" id="CHEBI:18420"/>
        <label>2</label>
    </ligand>
</feature>
<feature type="binding site" evidence="1">
    <location>
        <position position="513"/>
    </location>
    <ligand>
        <name>ATP</name>
        <dbReference type="ChEBI" id="CHEBI:30616"/>
    </ligand>
</feature>
<feature type="binding site" evidence="1">
    <location>
        <position position="548"/>
    </location>
    <ligand>
        <name>ATP</name>
        <dbReference type="ChEBI" id="CHEBI:30616"/>
    </ligand>
</feature>
<feature type="binding site" evidence="1">
    <location>
        <position position="555"/>
    </location>
    <ligand>
        <name>ATP</name>
        <dbReference type="ChEBI" id="CHEBI:30616"/>
    </ligand>
</feature>
<feature type="binding site" evidence="1">
    <location>
        <position position="583"/>
    </location>
    <ligand>
        <name>ATP</name>
        <dbReference type="ChEBI" id="CHEBI:30616"/>
    </ligand>
</feature>
<feature type="binding site" evidence="1">
    <location>
        <begin position="618"/>
        <end position="620"/>
    </location>
    <ligand>
        <name>ATP</name>
        <dbReference type="ChEBI" id="CHEBI:30616"/>
    </ligand>
</feature>
<feature type="site" description="Transition state stabilizer" evidence="1">
    <location>
        <position position="328"/>
    </location>
</feature>